<evidence type="ECO:0000255" key="1">
    <source>
        <dbReference type="HAMAP-Rule" id="MF_00815"/>
    </source>
</evidence>
<reference key="1">
    <citation type="journal article" date="2006" name="J. Bacteriol.">
        <title>Comparative genomic evidence for a close relationship between the dimorphic prosthecate bacteria Hyphomonas neptunium and Caulobacter crescentus.</title>
        <authorList>
            <person name="Badger J.H."/>
            <person name="Hoover T.R."/>
            <person name="Brun Y.V."/>
            <person name="Weiner R.M."/>
            <person name="Laub M.T."/>
            <person name="Alexandre G."/>
            <person name="Mrazek J."/>
            <person name="Ren Q."/>
            <person name="Paulsen I.T."/>
            <person name="Nelson K.E."/>
            <person name="Khouri H.M."/>
            <person name="Radune D."/>
            <person name="Sosa J."/>
            <person name="Dodson R.J."/>
            <person name="Sullivan S.A."/>
            <person name="Rosovitz M.J."/>
            <person name="Madupu R."/>
            <person name="Brinkac L.M."/>
            <person name="Durkin A.S."/>
            <person name="Daugherty S.C."/>
            <person name="Kothari S.P."/>
            <person name="Giglio M.G."/>
            <person name="Zhou L."/>
            <person name="Haft D.H."/>
            <person name="Selengut J.D."/>
            <person name="Davidsen T.M."/>
            <person name="Yang Q."/>
            <person name="Zafar N."/>
            <person name="Ward N.L."/>
        </authorList>
    </citation>
    <scope>NUCLEOTIDE SEQUENCE [LARGE SCALE GENOMIC DNA]</scope>
    <source>
        <strain>ATCC 15444</strain>
    </source>
</reference>
<dbReference type="EMBL" id="CP000158">
    <property type="protein sequence ID" value="ABI78796.1"/>
    <property type="molecule type" value="Genomic_DNA"/>
</dbReference>
<dbReference type="RefSeq" id="WP_011646894.1">
    <property type="nucleotide sequence ID" value="NC_008358.1"/>
</dbReference>
<dbReference type="SMR" id="Q0C0Z9"/>
<dbReference type="STRING" id="228405.HNE_1893"/>
<dbReference type="KEGG" id="hne:HNE_1893"/>
<dbReference type="eggNOG" id="COG0224">
    <property type="taxonomic scope" value="Bacteria"/>
</dbReference>
<dbReference type="HOGENOM" id="CLU_050669_0_1_5"/>
<dbReference type="Proteomes" id="UP000001959">
    <property type="component" value="Chromosome"/>
</dbReference>
<dbReference type="GO" id="GO:0005886">
    <property type="term" value="C:plasma membrane"/>
    <property type="evidence" value="ECO:0007669"/>
    <property type="project" value="UniProtKB-SubCell"/>
</dbReference>
<dbReference type="GO" id="GO:0045259">
    <property type="term" value="C:proton-transporting ATP synthase complex"/>
    <property type="evidence" value="ECO:0007669"/>
    <property type="project" value="UniProtKB-KW"/>
</dbReference>
<dbReference type="GO" id="GO:0005524">
    <property type="term" value="F:ATP binding"/>
    <property type="evidence" value="ECO:0007669"/>
    <property type="project" value="UniProtKB-UniRule"/>
</dbReference>
<dbReference type="GO" id="GO:0046933">
    <property type="term" value="F:proton-transporting ATP synthase activity, rotational mechanism"/>
    <property type="evidence" value="ECO:0007669"/>
    <property type="project" value="UniProtKB-UniRule"/>
</dbReference>
<dbReference type="GO" id="GO:0042777">
    <property type="term" value="P:proton motive force-driven plasma membrane ATP synthesis"/>
    <property type="evidence" value="ECO:0007669"/>
    <property type="project" value="UniProtKB-UniRule"/>
</dbReference>
<dbReference type="CDD" id="cd12151">
    <property type="entry name" value="F1-ATPase_gamma"/>
    <property type="match status" value="1"/>
</dbReference>
<dbReference type="FunFam" id="1.10.287.80:FF:000001">
    <property type="entry name" value="ATP synthase gamma chain"/>
    <property type="match status" value="1"/>
</dbReference>
<dbReference type="FunFam" id="1.10.287.80:FF:000003">
    <property type="entry name" value="ATP synthase gamma chain, chloroplastic"/>
    <property type="match status" value="1"/>
</dbReference>
<dbReference type="Gene3D" id="3.40.1380.10">
    <property type="match status" value="1"/>
</dbReference>
<dbReference type="Gene3D" id="1.10.287.80">
    <property type="entry name" value="ATP synthase, gamma subunit, helix hairpin domain"/>
    <property type="match status" value="1"/>
</dbReference>
<dbReference type="HAMAP" id="MF_00815">
    <property type="entry name" value="ATP_synth_gamma_bact"/>
    <property type="match status" value="1"/>
</dbReference>
<dbReference type="InterPro" id="IPR035968">
    <property type="entry name" value="ATP_synth_F1_ATPase_gsu"/>
</dbReference>
<dbReference type="InterPro" id="IPR000131">
    <property type="entry name" value="ATP_synth_F1_gsu"/>
</dbReference>
<dbReference type="InterPro" id="IPR023632">
    <property type="entry name" value="ATP_synth_F1_gsu_CS"/>
</dbReference>
<dbReference type="NCBIfam" id="TIGR01146">
    <property type="entry name" value="ATPsyn_F1gamma"/>
    <property type="match status" value="1"/>
</dbReference>
<dbReference type="NCBIfam" id="NF004146">
    <property type="entry name" value="PRK05621.1-4"/>
    <property type="match status" value="1"/>
</dbReference>
<dbReference type="PANTHER" id="PTHR11693">
    <property type="entry name" value="ATP SYNTHASE GAMMA CHAIN"/>
    <property type="match status" value="1"/>
</dbReference>
<dbReference type="PANTHER" id="PTHR11693:SF22">
    <property type="entry name" value="ATP SYNTHASE SUBUNIT GAMMA, MITOCHONDRIAL"/>
    <property type="match status" value="1"/>
</dbReference>
<dbReference type="Pfam" id="PF00231">
    <property type="entry name" value="ATP-synt"/>
    <property type="match status" value="1"/>
</dbReference>
<dbReference type="PIRSF" id="PIRSF039089">
    <property type="entry name" value="ATP_synthase_gamma"/>
    <property type="match status" value="1"/>
</dbReference>
<dbReference type="PRINTS" id="PR00126">
    <property type="entry name" value="ATPASEGAMMA"/>
</dbReference>
<dbReference type="SUPFAM" id="SSF52943">
    <property type="entry name" value="ATP synthase (F1-ATPase), gamma subunit"/>
    <property type="match status" value="1"/>
</dbReference>
<dbReference type="PROSITE" id="PS00153">
    <property type="entry name" value="ATPASE_GAMMA"/>
    <property type="match status" value="1"/>
</dbReference>
<feature type="chain" id="PRO_1000053229" description="ATP synthase gamma chain">
    <location>
        <begin position="1"/>
        <end position="292"/>
    </location>
</feature>
<name>ATPG_HYPNA</name>
<protein>
    <recommendedName>
        <fullName evidence="1">ATP synthase gamma chain</fullName>
    </recommendedName>
    <alternativeName>
        <fullName evidence="1">ATP synthase F1 sector gamma subunit</fullName>
    </alternativeName>
    <alternativeName>
        <fullName evidence="1">F-ATPase gamma subunit</fullName>
    </alternativeName>
</protein>
<comment type="function">
    <text evidence="1">Produces ATP from ADP in the presence of a proton gradient across the membrane. The gamma chain is believed to be important in regulating ATPase activity and the flow of protons through the CF(0) complex.</text>
</comment>
<comment type="subunit">
    <text evidence="1">F-type ATPases have 2 components, CF(1) - the catalytic core - and CF(0) - the membrane proton channel. CF(1) has five subunits: alpha(3), beta(3), gamma(1), delta(1), epsilon(1). CF(0) has three main subunits: a, b and c.</text>
</comment>
<comment type="subcellular location">
    <subcellularLocation>
        <location evidence="1">Cell inner membrane</location>
        <topology evidence="1">Peripheral membrane protein</topology>
    </subcellularLocation>
</comment>
<comment type="similarity">
    <text evidence="1">Belongs to the ATPase gamma chain family.</text>
</comment>
<proteinExistence type="inferred from homology"/>
<sequence length="292" mass="31262">MPSLKDLKNRIGSVKSTQKITKAMQLVAAAKLKRAQEAATAARPYAERLAAVLANLAATTGQGGPKLLTGNGTDQTHLLVVMTAERGLAGGFNAYVAKLARLKIQQLQSEGKTVKVLTIGKKGREVLAREHSALFTGHVNLSDVKSNNFTDASLSVGQMLTKGFENGEFDVATLIYSQFKNVLSQVPTAQQLIPATAPEGAPVIDLGGAQYIYEPSEEALLEALLPRYINTQILSAMLESSAGEQASRMTAMDNATRNAKDLIKALNLKYNRARQAQITKELIEIISGAEAL</sequence>
<accession>Q0C0Z9</accession>
<organism>
    <name type="scientific">Hyphomonas neptunium (strain ATCC 15444)</name>
    <dbReference type="NCBI Taxonomy" id="228405"/>
    <lineage>
        <taxon>Bacteria</taxon>
        <taxon>Pseudomonadati</taxon>
        <taxon>Pseudomonadota</taxon>
        <taxon>Alphaproteobacteria</taxon>
        <taxon>Hyphomonadales</taxon>
        <taxon>Hyphomonadaceae</taxon>
        <taxon>Hyphomonas</taxon>
    </lineage>
</organism>
<keyword id="KW-0066">ATP synthesis</keyword>
<keyword id="KW-0997">Cell inner membrane</keyword>
<keyword id="KW-1003">Cell membrane</keyword>
<keyword id="KW-0139">CF(1)</keyword>
<keyword id="KW-0375">Hydrogen ion transport</keyword>
<keyword id="KW-0406">Ion transport</keyword>
<keyword id="KW-0472">Membrane</keyword>
<keyword id="KW-1185">Reference proteome</keyword>
<keyword id="KW-0813">Transport</keyword>
<gene>
    <name evidence="1" type="primary">atpG</name>
    <name type="ordered locus">HNE_1893</name>
</gene>